<comment type="function">
    <text evidence="1">An accessory protein needed during the final step in the assembly of 30S ribosomal subunit, possibly for assembly of the head region. Essential for efficient processing of 16S rRNA. May be needed both before and after RbfA during the maturation of 16S rRNA. It has affinity for free ribosomal 30S subunits but not for 70S ribosomes.</text>
</comment>
<comment type="subunit">
    <text evidence="1">Binds ribosomal protein uS19.</text>
</comment>
<comment type="subcellular location">
    <subcellularLocation>
        <location evidence="1">Cytoplasm</location>
    </subcellularLocation>
</comment>
<comment type="domain">
    <text evidence="1">The PRC barrel domain binds ribosomal protein uS19.</text>
</comment>
<comment type="similarity">
    <text evidence="1">Belongs to the RimM family.</text>
</comment>
<organism>
    <name type="scientific">Nitrosomonas eutropha (strain DSM 101675 / C91 / Nm57)</name>
    <dbReference type="NCBI Taxonomy" id="335283"/>
    <lineage>
        <taxon>Bacteria</taxon>
        <taxon>Pseudomonadati</taxon>
        <taxon>Pseudomonadota</taxon>
        <taxon>Betaproteobacteria</taxon>
        <taxon>Nitrosomonadales</taxon>
        <taxon>Nitrosomonadaceae</taxon>
        <taxon>Nitrosomonas</taxon>
    </lineage>
</organism>
<protein>
    <recommendedName>
        <fullName evidence="1">Ribosome maturation factor RimM</fullName>
    </recommendedName>
</protein>
<evidence type="ECO:0000255" key="1">
    <source>
        <dbReference type="HAMAP-Rule" id="MF_00014"/>
    </source>
</evidence>
<reference key="1">
    <citation type="journal article" date="2007" name="Environ. Microbiol.">
        <title>Whole-genome analysis of the ammonia-oxidizing bacterium, Nitrosomonas eutropha C91: implications for niche adaptation.</title>
        <authorList>
            <person name="Stein L.Y."/>
            <person name="Arp D.J."/>
            <person name="Berube P.M."/>
            <person name="Chain P.S."/>
            <person name="Hauser L."/>
            <person name="Jetten M.S."/>
            <person name="Klotz M.G."/>
            <person name="Larimer F.W."/>
            <person name="Norton J.M."/>
            <person name="Op den Camp H.J.M."/>
            <person name="Shin M."/>
            <person name="Wei X."/>
        </authorList>
    </citation>
    <scope>NUCLEOTIDE SEQUENCE [LARGE SCALE GENOMIC DNA]</scope>
    <source>
        <strain>DSM 101675 / C91 / Nm57</strain>
    </source>
</reference>
<sequence length="168" mass="18984">MVVLGRVIGPHGIRGQIKVTPFTEHIDGLMEYPVWWLSNDEKSWQIVHPTSFSVHDSLLIITLEEYSDRTNASGLKGWLIAVPRSQLPQLSEDGKEGYYWSDLIGISVVNTQGEFIGTVAGLFETGANDVLRIQLPGGKEELIPFVDQVVRQVDMRSRQIMVDWELDY</sequence>
<name>RIMM_NITEC</name>
<gene>
    <name evidence="1" type="primary">rimM</name>
    <name type="ordered locus">Neut_0444</name>
</gene>
<keyword id="KW-0143">Chaperone</keyword>
<keyword id="KW-0963">Cytoplasm</keyword>
<keyword id="KW-0690">Ribosome biogenesis</keyword>
<keyword id="KW-0698">rRNA processing</keyword>
<accession>Q0AIV0</accession>
<dbReference type="EMBL" id="CP000450">
    <property type="protein sequence ID" value="ABI58721.1"/>
    <property type="molecule type" value="Genomic_DNA"/>
</dbReference>
<dbReference type="RefSeq" id="WP_011633563.1">
    <property type="nucleotide sequence ID" value="NC_008344.1"/>
</dbReference>
<dbReference type="SMR" id="Q0AIV0"/>
<dbReference type="STRING" id="335283.Neut_0444"/>
<dbReference type="KEGG" id="net:Neut_0444"/>
<dbReference type="eggNOG" id="COG0806">
    <property type="taxonomic scope" value="Bacteria"/>
</dbReference>
<dbReference type="HOGENOM" id="CLU_077636_1_0_4"/>
<dbReference type="OrthoDB" id="9783509at2"/>
<dbReference type="Proteomes" id="UP000001966">
    <property type="component" value="Chromosome"/>
</dbReference>
<dbReference type="GO" id="GO:0005737">
    <property type="term" value="C:cytoplasm"/>
    <property type="evidence" value="ECO:0007669"/>
    <property type="project" value="UniProtKB-SubCell"/>
</dbReference>
<dbReference type="GO" id="GO:0005840">
    <property type="term" value="C:ribosome"/>
    <property type="evidence" value="ECO:0007669"/>
    <property type="project" value="InterPro"/>
</dbReference>
<dbReference type="GO" id="GO:0043022">
    <property type="term" value="F:ribosome binding"/>
    <property type="evidence" value="ECO:0007669"/>
    <property type="project" value="InterPro"/>
</dbReference>
<dbReference type="GO" id="GO:0042274">
    <property type="term" value="P:ribosomal small subunit biogenesis"/>
    <property type="evidence" value="ECO:0007669"/>
    <property type="project" value="UniProtKB-UniRule"/>
</dbReference>
<dbReference type="GO" id="GO:0006364">
    <property type="term" value="P:rRNA processing"/>
    <property type="evidence" value="ECO:0007669"/>
    <property type="project" value="UniProtKB-UniRule"/>
</dbReference>
<dbReference type="Gene3D" id="2.30.30.240">
    <property type="entry name" value="PRC-barrel domain"/>
    <property type="match status" value="1"/>
</dbReference>
<dbReference type="Gene3D" id="2.40.30.60">
    <property type="entry name" value="RimM"/>
    <property type="match status" value="1"/>
</dbReference>
<dbReference type="HAMAP" id="MF_00014">
    <property type="entry name" value="Ribosome_mat_RimM"/>
    <property type="match status" value="1"/>
</dbReference>
<dbReference type="InterPro" id="IPR011033">
    <property type="entry name" value="PRC_barrel-like_sf"/>
</dbReference>
<dbReference type="InterPro" id="IPR056792">
    <property type="entry name" value="PRC_RimM"/>
</dbReference>
<dbReference type="InterPro" id="IPR011961">
    <property type="entry name" value="RimM"/>
</dbReference>
<dbReference type="InterPro" id="IPR002676">
    <property type="entry name" value="RimM_N"/>
</dbReference>
<dbReference type="InterPro" id="IPR036976">
    <property type="entry name" value="RimM_N_sf"/>
</dbReference>
<dbReference type="InterPro" id="IPR009000">
    <property type="entry name" value="Transl_B-barrel_sf"/>
</dbReference>
<dbReference type="NCBIfam" id="TIGR02273">
    <property type="entry name" value="16S_RimM"/>
    <property type="match status" value="1"/>
</dbReference>
<dbReference type="PANTHER" id="PTHR33692">
    <property type="entry name" value="RIBOSOME MATURATION FACTOR RIMM"/>
    <property type="match status" value="1"/>
</dbReference>
<dbReference type="PANTHER" id="PTHR33692:SF1">
    <property type="entry name" value="RIBOSOME MATURATION FACTOR RIMM"/>
    <property type="match status" value="1"/>
</dbReference>
<dbReference type="Pfam" id="PF24986">
    <property type="entry name" value="PRC_RimM"/>
    <property type="match status" value="1"/>
</dbReference>
<dbReference type="Pfam" id="PF01782">
    <property type="entry name" value="RimM"/>
    <property type="match status" value="1"/>
</dbReference>
<dbReference type="SUPFAM" id="SSF50346">
    <property type="entry name" value="PRC-barrel domain"/>
    <property type="match status" value="1"/>
</dbReference>
<dbReference type="SUPFAM" id="SSF50447">
    <property type="entry name" value="Translation proteins"/>
    <property type="match status" value="1"/>
</dbReference>
<feature type="chain" id="PRO_1000001205" description="Ribosome maturation factor RimM">
    <location>
        <begin position="1"/>
        <end position="168"/>
    </location>
</feature>
<feature type="domain" description="PRC barrel" evidence="1">
    <location>
        <begin position="95"/>
        <end position="168"/>
    </location>
</feature>
<proteinExistence type="inferred from homology"/>